<accession>Q8RFP5</accession>
<proteinExistence type="inferred from homology"/>
<keyword id="KW-0627">Porphyrin biosynthesis</keyword>
<keyword id="KW-1185">Reference proteome</keyword>
<keyword id="KW-0808">Transferase</keyword>
<gene>
    <name evidence="1" type="primary">hemC</name>
    <name type="ordered locus">FN0645</name>
</gene>
<sequence>MKKNIIIGSRGSILALAQANLVKDRLQGNYPNLSFEIKEIVTSGDKDLKSNWENSDISLKSFFTKEIEQELLDGEIDIAVHSMKDMPAVSAKSLICGAIPDREDPRDVLVSKNGLLVTLPQGAKVGTSSLRRAMNLKTVRPDFEIKHLRGNIHTRLKKLETEDYDAIVLAAAGLKRTGLADKITEYLNGEVFPPAPAQGVLYIQCRENDEEIKEILKSIHNEAIAKIVEIEREFSKIFDGGCHTPMGCYSQVNGDKIKFTAVYLDEGKQIRAVVEDDLAKGKEIAYMAAEEIKNKIVK</sequence>
<protein>
    <recommendedName>
        <fullName evidence="1">Porphobilinogen deaminase</fullName>
        <shortName evidence="1">PBG</shortName>
        <ecNumber evidence="1">2.5.1.61</ecNumber>
    </recommendedName>
    <alternativeName>
        <fullName evidence="1">Hydroxymethylbilane synthase</fullName>
        <shortName evidence="1">HMBS</shortName>
    </alternativeName>
    <alternativeName>
        <fullName evidence="1">Pre-uroporphyrinogen synthase</fullName>
    </alternativeName>
</protein>
<organism>
    <name type="scientific">Fusobacterium nucleatum subsp. nucleatum (strain ATCC 25586 / DSM 15643 / BCRC 10681 / CIP 101130 / JCM 8532 / KCTC 2640 / LMG 13131 / VPI 4355)</name>
    <dbReference type="NCBI Taxonomy" id="190304"/>
    <lineage>
        <taxon>Bacteria</taxon>
        <taxon>Fusobacteriati</taxon>
        <taxon>Fusobacteriota</taxon>
        <taxon>Fusobacteriia</taxon>
        <taxon>Fusobacteriales</taxon>
        <taxon>Fusobacteriaceae</taxon>
        <taxon>Fusobacterium</taxon>
    </lineage>
</organism>
<evidence type="ECO:0000255" key="1">
    <source>
        <dbReference type="HAMAP-Rule" id="MF_00260"/>
    </source>
</evidence>
<reference key="1">
    <citation type="journal article" date="2002" name="J. Bacteriol.">
        <title>Genome sequence and analysis of the oral bacterium Fusobacterium nucleatum strain ATCC 25586.</title>
        <authorList>
            <person name="Kapatral V."/>
            <person name="Anderson I."/>
            <person name="Ivanova N."/>
            <person name="Reznik G."/>
            <person name="Los T."/>
            <person name="Lykidis A."/>
            <person name="Bhattacharyya A."/>
            <person name="Bartman A."/>
            <person name="Gardner W."/>
            <person name="Grechkin G."/>
            <person name="Zhu L."/>
            <person name="Vasieva O."/>
            <person name="Chu L."/>
            <person name="Kogan Y."/>
            <person name="Chaga O."/>
            <person name="Goltsman E."/>
            <person name="Bernal A."/>
            <person name="Larsen N."/>
            <person name="D'Souza M."/>
            <person name="Walunas T."/>
            <person name="Pusch G."/>
            <person name="Haselkorn R."/>
            <person name="Fonstein M."/>
            <person name="Kyrpides N.C."/>
            <person name="Overbeek R."/>
        </authorList>
    </citation>
    <scope>NUCLEOTIDE SEQUENCE [LARGE SCALE GENOMIC DNA]</scope>
    <source>
        <strain>ATCC 25586 / DSM 15643 / BCRC 10681 / CIP 101130 / JCM 8532 / KCTC 2640 / LMG 13131 / VPI 4355</strain>
    </source>
</reference>
<dbReference type="EC" id="2.5.1.61" evidence="1"/>
<dbReference type="EMBL" id="AE009951">
    <property type="protein sequence ID" value="AAL94841.1"/>
    <property type="molecule type" value="Genomic_DNA"/>
</dbReference>
<dbReference type="RefSeq" id="NP_603542.1">
    <property type="nucleotide sequence ID" value="NC_003454.1"/>
</dbReference>
<dbReference type="RefSeq" id="WP_011016555.1">
    <property type="nucleotide sequence ID" value="NZ_CP028101.1"/>
</dbReference>
<dbReference type="SMR" id="Q8RFP5"/>
<dbReference type="FunCoup" id="Q8RFP5">
    <property type="interactions" value="370"/>
</dbReference>
<dbReference type="STRING" id="190304.FN0645"/>
<dbReference type="PaxDb" id="190304-FN0645"/>
<dbReference type="EnsemblBacteria" id="AAL94841">
    <property type="protein sequence ID" value="AAL94841"/>
    <property type="gene ID" value="FN0645"/>
</dbReference>
<dbReference type="GeneID" id="79783642"/>
<dbReference type="KEGG" id="fnu:FN0645"/>
<dbReference type="PATRIC" id="fig|190304.8.peg.1209"/>
<dbReference type="eggNOG" id="COG0181">
    <property type="taxonomic scope" value="Bacteria"/>
</dbReference>
<dbReference type="HOGENOM" id="CLU_019704_0_2_0"/>
<dbReference type="InParanoid" id="Q8RFP5"/>
<dbReference type="BioCyc" id="FNUC190304:G1FZS-1231-MONOMER"/>
<dbReference type="UniPathway" id="UPA00251">
    <property type="reaction ID" value="UER00319"/>
</dbReference>
<dbReference type="Proteomes" id="UP000002521">
    <property type="component" value="Chromosome"/>
</dbReference>
<dbReference type="GO" id="GO:0005737">
    <property type="term" value="C:cytoplasm"/>
    <property type="evidence" value="ECO:0000318"/>
    <property type="project" value="GO_Central"/>
</dbReference>
<dbReference type="GO" id="GO:0004418">
    <property type="term" value="F:hydroxymethylbilane synthase activity"/>
    <property type="evidence" value="ECO:0000318"/>
    <property type="project" value="GO_Central"/>
</dbReference>
<dbReference type="GO" id="GO:0006783">
    <property type="term" value="P:heme biosynthetic process"/>
    <property type="evidence" value="ECO:0000318"/>
    <property type="project" value="GO_Central"/>
</dbReference>
<dbReference type="GO" id="GO:0006782">
    <property type="term" value="P:protoporphyrinogen IX biosynthetic process"/>
    <property type="evidence" value="ECO:0007669"/>
    <property type="project" value="UniProtKB-UniRule"/>
</dbReference>
<dbReference type="CDD" id="cd13647">
    <property type="entry name" value="PBP2_PBGD_2"/>
    <property type="match status" value="1"/>
</dbReference>
<dbReference type="FunFam" id="3.40.190.10:FF:000005">
    <property type="entry name" value="Porphobilinogen deaminase"/>
    <property type="match status" value="1"/>
</dbReference>
<dbReference type="FunFam" id="3.40.190.10:FF:000086">
    <property type="entry name" value="Probable porphobilinogen deaminase"/>
    <property type="match status" value="1"/>
</dbReference>
<dbReference type="Gene3D" id="3.40.190.10">
    <property type="entry name" value="Periplasmic binding protein-like II"/>
    <property type="match status" value="2"/>
</dbReference>
<dbReference type="Gene3D" id="3.30.160.40">
    <property type="entry name" value="Porphobilinogen deaminase, C-terminal domain"/>
    <property type="match status" value="1"/>
</dbReference>
<dbReference type="HAMAP" id="MF_00260">
    <property type="entry name" value="Porphobil_deam"/>
    <property type="match status" value="1"/>
</dbReference>
<dbReference type="InterPro" id="IPR000860">
    <property type="entry name" value="HemC"/>
</dbReference>
<dbReference type="InterPro" id="IPR022419">
    <property type="entry name" value="Porphobilin_deaminase_cofac_BS"/>
</dbReference>
<dbReference type="InterPro" id="IPR022417">
    <property type="entry name" value="Porphobilin_deaminase_N"/>
</dbReference>
<dbReference type="InterPro" id="IPR022418">
    <property type="entry name" value="Porphobilinogen_deaminase_C"/>
</dbReference>
<dbReference type="InterPro" id="IPR036803">
    <property type="entry name" value="Porphobilinogen_deaminase_C_sf"/>
</dbReference>
<dbReference type="NCBIfam" id="TIGR00212">
    <property type="entry name" value="hemC"/>
    <property type="match status" value="1"/>
</dbReference>
<dbReference type="PANTHER" id="PTHR11557">
    <property type="entry name" value="PORPHOBILINOGEN DEAMINASE"/>
    <property type="match status" value="1"/>
</dbReference>
<dbReference type="PANTHER" id="PTHR11557:SF0">
    <property type="entry name" value="PORPHOBILINOGEN DEAMINASE"/>
    <property type="match status" value="1"/>
</dbReference>
<dbReference type="Pfam" id="PF01379">
    <property type="entry name" value="Porphobil_deam"/>
    <property type="match status" value="1"/>
</dbReference>
<dbReference type="Pfam" id="PF03900">
    <property type="entry name" value="Porphobil_deamC"/>
    <property type="match status" value="1"/>
</dbReference>
<dbReference type="PIRSF" id="PIRSF001438">
    <property type="entry name" value="4pyrrol_synth_OHMeBilane_synth"/>
    <property type="match status" value="1"/>
</dbReference>
<dbReference type="PRINTS" id="PR00151">
    <property type="entry name" value="PORPHBDMNASE"/>
</dbReference>
<dbReference type="SUPFAM" id="SSF53850">
    <property type="entry name" value="Periplasmic binding protein-like II"/>
    <property type="match status" value="1"/>
</dbReference>
<dbReference type="SUPFAM" id="SSF54782">
    <property type="entry name" value="Porphobilinogen deaminase (hydroxymethylbilane synthase), C-terminal domain"/>
    <property type="match status" value="1"/>
</dbReference>
<dbReference type="PROSITE" id="PS00533">
    <property type="entry name" value="PORPHOBILINOGEN_DEAM"/>
    <property type="match status" value="1"/>
</dbReference>
<feature type="chain" id="PRO_0000142940" description="Porphobilinogen deaminase">
    <location>
        <begin position="1"/>
        <end position="298"/>
    </location>
</feature>
<feature type="modified residue" description="S-(dipyrrolylmethanemethyl)cysteine" evidence="1">
    <location>
        <position position="242"/>
    </location>
</feature>
<comment type="function">
    <text evidence="1">Tetrapolymerization of the monopyrrole PBG into the hydroxymethylbilane pre-uroporphyrinogen in several discrete steps.</text>
</comment>
<comment type="catalytic activity">
    <reaction evidence="1">
        <text>4 porphobilinogen + H2O = hydroxymethylbilane + 4 NH4(+)</text>
        <dbReference type="Rhea" id="RHEA:13185"/>
        <dbReference type="ChEBI" id="CHEBI:15377"/>
        <dbReference type="ChEBI" id="CHEBI:28938"/>
        <dbReference type="ChEBI" id="CHEBI:57845"/>
        <dbReference type="ChEBI" id="CHEBI:58126"/>
        <dbReference type="EC" id="2.5.1.61"/>
    </reaction>
</comment>
<comment type="cofactor">
    <cofactor evidence="1">
        <name>dipyrromethane</name>
        <dbReference type="ChEBI" id="CHEBI:60342"/>
    </cofactor>
    <text evidence="1">Binds 1 dipyrromethane group covalently.</text>
</comment>
<comment type="pathway">
    <text evidence="1">Porphyrin-containing compound metabolism; protoporphyrin-IX biosynthesis; coproporphyrinogen-III from 5-aminolevulinate: step 2/4.</text>
</comment>
<comment type="subunit">
    <text evidence="1">Monomer.</text>
</comment>
<comment type="miscellaneous">
    <text evidence="1">The porphobilinogen subunits are added to the dipyrromethane group.</text>
</comment>
<comment type="similarity">
    <text evidence="1">Belongs to the HMBS family.</text>
</comment>
<name>HEM3_FUSNN</name>